<feature type="chain" id="PRO_0000204741" description="Aminoacyltransferase FemB">
    <location>
        <begin position="1"/>
        <end position="419"/>
    </location>
</feature>
<dbReference type="EC" id="2.3.2.18"/>
<dbReference type="EMBL" id="BX571856">
    <property type="protein sequence ID" value="CAG40386.1"/>
    <property type="molecule type" value="Genomic_DNA"/>
</dbReference>
<dbReference type="RefSeq" id="WP_000673098.1">
    <property type="nucleotide sequence ID" value="NC_002952.2"/>
</dbReference>
<dbReference type="SMR" id="Q6GH30"/>
<dbReference type="KEGG" id="sar:SAR1388"/>
<dbReference type="HOGENOM" id="CLU_048411_1_0_9"/>
<dbReference type="Proteomes" id="UP000000596">
    <property type="component" value="Chromosome"/>
</dbReference>
<dbReference type="GO" id="GO:0005737">
    <property type="term" value="C:cytoplasm"/>
    <property type="evidence" value="ECO:0007669"/>
    <property type="project" value="UniProtKB-SubCell"/>
</dbReference>
<dbReference type="GO" id="GO:0016755">
    <property type="term" value="F:aminoacyltransferase activity"/>
    <property type="evidence" value="ECO:0007669"/>
    <property type="project" value="InterPro"/>
</dbReference>
<dbReference type="GO" id="GO:0071555">
    <property type="term" value="P:cell wall organization"/>
    <property type="evidence" value="ECO:0007669"/>
    <property type="project" value="UniProtKB-KW"/>
</dbReference>
<dbReference type="GO" id="GO:0009252">
    <property type="term" value="P:peptidoglycan biosynthetic process"/>
    <property type="evidence" value="ECO:0007669"/>
    <property type="project" value="UniProtKB-KW"/>
</dbReference>
<dbReference type="GO" id="GO:0008360">
    <property type="term" value="P:regulation of cell shape"/>
    <property type="evidence" value="ECO:0007669"/>
    <property type="project" value="UniProtKB-KW"/>
</dbReference>
<dbReference type="GO" id="GO:0046677">
    <property type="term" value="P:response to antibiotic"/>
    <property type="evidence" value="ECO:0007669"/>
    <property type="project" value="UniProtKB-KW"/>
</dbReference>
<dbReference type="Gene3D" id="1.20.58.90">
    <property type="match status" value="1"/>
</dbReference>
<dbReference type="Gene3D" id="3.40.630.30">
    <property type="match status" value="2"/>
</dbReference>
<dbReference type="InterPro" id="IPR016181">
    <property type="entry name" value="Acyl_CoA_acyltransferase"/>
</dbReference>
<dbReference type="InterPro" id="IPR003447">
    <property type="entry name" value="FEMABX"/>
</dbReference>
<dbReference type="InterPro" id="IPR050644">
    <property type="entry name" value="PG_Glycine_Bridge_Synth"/>
</dbReference>
<dbReference type="PANTHER" id="PTHR36174:SF2">
    <property type="entry name" value="AMINOACYLTRANSFERASE FEMA"/>
    <property type="match status" value="1"/>
</dbReference>
<dbReference type="PANTHER" id="PTHR36174">
    <property type="entry name" value="LIPID II:GLYCINE GLYCYLTRANSFERASE"/>
    <property type="match status" value="1"/>
</dbReference>
<dbReference type="Pfam" id="PF02388">
    <property type="entry name" value="FemAB"/>
    <property type="match status" value="1"/>
</dbReference>
<dbReference type="SUPFAM" id="SSF55729">
    <property type="entry name" value="Acyl-CoA N-acyltransferases (Nat)"/>
    <property type="match status" value="2"/>
</dbReference>
<dbReference type="PROSITE" id="PS51191">
    <property type="entry name" value="FEMABX"/>
    <property type="match status" value="1"/>
</dbReference>
<comment type="function">
    <text evidence="1">Catalyzes the formation of the pentaglycine interpeptide bridge, which is characteristic of the S.aureus peptidoglycan. Adds glycines 4 and 5 of the pentaglycine bridge, using glycyl-tRNA(Gly) as donor. Involved in resistance to methicillin (By similarity).</text>
</comment>
<comment type="catalytic activity">
    <reaction>
        <text>MurNAc-L-Ala-D-isoglutaminyl-L-Lys-(N(6)-tri-Gly)-D-Ala-D-Ala-diphospho-di-trans,octa-cis-undecaprenyl-GlcNAc + 2 glycyl-tRNA(Gly) = MurNAc-L-Ala-D-isoglutaminyl-L-Lys-(N(6)-penta-Gly)-D-Ala-D-Ala-diphospho-di-trans,octa-cis-undecaprenyl-GlcNAc + 2 tRNA(Gly) + 2 H(+)</text>
        <dbReference type="Rhea" id="RHEA:30443"/>
        <dbReference type="Rhea" id="RHEA-COMP:9664"/>
        <dbReference type="Rhea" id="RHEA-COMP:9683"/>
        <dbReference type="ChEBI" id="CHEBI:15378"/>
        <dbReference type="ChEBI" id="CHEBI:62235"/>
        <dbReference type="ChEBI" id="CHEBI:62236"/>
        <dbReference type="ChEBI" id="CHEBI:78442"/>
        <dbReference type="ChEBI" id="CHEBI:78522"/>
        <dbReference type="EC" id="2.3.2.18"/>
    </reaction>
</comment>
<comment type="subunit">
    <text evidence="1">Homodimer. Interacts with FemA (By similarity).</text>
</comment>
<comment type="subcellular location">
    <subcellularLocation>
        <location evidence="1">Cytoplasm</location>
    </subcellularLocation>
</comment>
<comment type="similarity">
    <text evidence="2">Belongs to the FemABX family.</text>
</comment>
<sequence>MKFTELTVTEFDNFVQNPSLESHYFQVKENIVTRENDGFEVVLLGIKDDNNKVIAASLFSKIPTMGSYVYYSNRGPVMDFSDLGLVDYYLKELDKYLQQHQCLYVKLDPYWLYHLYDKDIVPFEGREKNDALVNLFKSHGYEHHGFTTEYDTSSQVRWMGVLNLEGKTPETLKKTFDSQRKRNINKAINYGVKVRFLERDEFNLFLDLYRETEERAGFVSKTDDYFYNFIDTYGDKVLVPLAYIDLDEYVLKLQQELNDKENRRDQMMAKENKSDKQMKKIAELDKQIDHDQHELLNASELSKTDGPILNLASGVYFANAYEVNYFSGGSSEKYNQFMGPYMMHWFMINYCFDNGYDRYNFYGLSGDFTENSEDYGVYRFKRGFNVQIEELIGDFYKPIHKVKYWLFTTLDKLRKKLKK</sequence>
<reference key="1">
    <citation type="journal article" date="2004" name="Proc. Natl. Acad. Sci. U.S.A.">
        <title>Complete genomes of two clinical Staphylococcus aureus strains: evidence for the rapid evolution of virulence and drug resistance.</title>
        <authorList>
            <person name="Holden M.T.G."/>
            <person name="Feil E.J."/>
            <person name="Lindsay J.A."/>
            <person name="Peacock S.J."/>
            <person name="Day N.P.J."/>
            <person name="Enright M.C."/>
            <person name="Foster T.J."/>
            <person name="Moore C.E."/>
            <person name="Hurst L."/>
            <person name="Atkin R."/>
            <person name="Barron A."/>
            <person name="Bason N."/>
            <person name="Bentley S.D."/>
            <person name="Chillingworth C."/>
            <person name="Chillingworth T."/>
            <person name="Churcher C."/>
            <person name="Clark L."/>
            <person name="Corton C."/>
            <person name="Cronin A."/>
            <person name="Doggett J."/>
            <person name="Dowd L."/>
            <person name="Feltwell T."/>
            <person name="Hance Z."/>
            <person name="Harris B."/>
            <person name="Hauser H."/>
            <person name="Holroyd S."/>
            <person name="Jagels K."/>
            <person name="James K.D."/>
            <person name="Lennard N."/>
            <person name="Line A."/>
            <person name="Mayes R."/>
            <person name="Moule S."/>
            <person name="Mungall K."/>
            <person name="Ormond D."/>
            <person name="Quail M.A."/>
            <person name="Rabbinowitsch E."/>
            <person name="Rutherford K.M."/>
            <person name="Sanders M."/>
            <person name="Sharp S."/>
            <person name="Simmonds M."/>
            <person name="Stevens K."/>
            <person name="Whitehead S."/>
            <person name="Barrell B.G."/>
            <person name="Spratt B.G."/>
            <person name="Parkhill J."/>
        </authorList>
    </citation>
    <scope>NUCLEOTIDE SEQUENCE [LARGE SCALE GENOMIC DNA]</scope>
    <source>
        <strain>MRSA252</strain>
    </source>
</reference>
<accession>Q6GH30</accession>
<proteinExistence type="inferred from homology"/>
<organism>
    <name type="scientific">Staphylococcus aureus (strain MRSA252)</name>
    <dbReference type="NCBI Taxonomy" id="282458"/>
    <lineage>
        <taxon>Bacteria</taxon>
        <taxon>Bacillati</taxon>
        <taxon>Bacillota</taxon>
        <taxon>Bacilli</taxon>
        <taxon>Bacillales</taxon>
        <taxon>Staphylococcaceae</taxon>
        <taxon>Staphylococcus</taxon>
    </lineage>
</organism>
<evidence type="ECO:0000250" key="1"/>
<evidence type="ECO:0000305" key="2"/>
<protein>
    <recommendedName>
        <fullName>Aminoacyltransferase FemB</fullName>
        <ecNumber>2.3.2.18</ecNumber>
    </recommendedName>
    <alternativeName>
        <fullName>Factor essential for expression of methicillin resistance B</fullName>
    </alternativeName>
    <alternativeName>
        <fullName>N-acetylmuramoyl-L-alanyl-D-glutamyl-L-lysyl-(N6-triglycine)-D-alanyl-D-alanine-diphosphoundecaprenyl-N-acetylglucosamine:glycine glycyltransferase</fullName>
    </alternativeName>
</protein>
<name>FEMB_STAAR</name>
<keyword id="KW-0012">Acyltransferase</keyword>
<keyword id="KW-0046">Antibiotic resistance</keyword>
<keyword id="KW-0133">Cell shape</keyword>
<keyword id="KW-0961">Cell wall biogenesis/degradation</keyword>
<keyword id="KW-0963">Cytoplasm</keyword>
<keyword id="KW-0573">Peptidoglycan synthesis</keyword>
<keyword id="KW-0808">Transferase</keyword>
<gene>
    <name type="primary">femB</name>
    <name type="ordered locus">SAR1388</name>
</gene>